<gene>
    <name evidence="1" type="primary">tadA</name>
    <name type="ordered locus">SF2606</name>
    <name type="ordered locus">S2778</name>
</gene>
<dbReference type="EC" id="3.5.4.33" evidence="1"/>
<dbReference type="EMBL" id="AE005674">
    <property type="protein sequence ID" value="AAN44103.1"/>
    <property type="status" value="ALT_INIT"/>
    <property type="molecule type" value="Genomic_DNA"/>
</dbReference>
<dbReference type="EMBL" id="AE014073">
    <property type="protein sequence ID" value="AAP17927.1"/>
    <property type="status" value="ALT_INIT"/>
    <property type="molecule type" value="Genomic_DNA"/>
</dbReference>
<dbReference type="RefSeq" id="WP_001297409.1">
    <property type="nucleotide sequence ID" value="NZ_WPGW01000021.1"/>
</dbReference>
<dbReference type="SMR" id="P68397"/>
<dbReference type="STRING" id="198214.SF2606"/>
<dbReference type="PaxDb" id="198214-SF2606"/>
<dbReference type="GeneID" id="75206252"/>
<dbReference type="KEGG" id="sfl:SF2606"/>
<dbReference type="KEGG" id="sfx:S2778"/>
<dbReference type="PATRIC" id="fig|198214.7.peg.3111"/>
<dbReference type="HOGENOM" id="CLU_025810_3_0_6"/>
<dbReference type="Proteomes" id="UP000001006">
    <property type="component" value="Chromosome"/>
</dbReference>
<dbReference type="Proteomes" id="UP000002673">
    <property type="component" value="Chromosome"/>
</dbReference>
<dbReference type="GO" id="GO:0052717">
    <property type="term" value="F:tRNA-specific adenosine-34 deaminase activity"/>
    <property type="evidence" value="ECO:0007669"/>
    <property type="project" value="UniProtKB-UniRule"/>
</dbReference>
<dbReference type="GO" id="GO:0008270">
    <property type="term" value="F:zinc ion binding"/>
    <property type="evidence" value="ECO:0007669"/>
    <property type="project" value="UniProtKB-UniRule"/>
</dbReference>
<dbReference type="GO" id="GO:0002100">
    <property type="term" value="P:tRNA wobble adenosine to inosine editing"/>
    <property type="evidence" value="ECO:0007669"/>
    <property type="project" value="UniProtKB-UniRule"/>
</dbReference>
<dbReference type="CDD" id="cd01285">
    <property type="entry name" value="nucleoside_deaminase"/>
    <property type="match status" value="1"/>
</dbReference>
<dbReference type="FunFam" id="3.40.140.10:FF:000005">
    <property type="entry name" value="tRNA-specific adenosine deaminase"/>
    <property type="match status" value="1"/>
</dbReference>
<dbReference type="Gene3D" id="3.40.140.10">
    <property type="entry name" value="Cytidine Deaminase, domain 2"/>
    <property type="match status" value="1"/>
</dbReference>
<dbReference type="HAMAP" id="MF_00972">
    <property type="entry name" value="tRNA_aden_deaminase"/>
    <property type="match status" value="1"/>
</dbReference>
<dbReference type="InterPro" id="IPR016192">
    <property type="entry name" value="APOBEC/CMP_deaminase_Zn-bd"/>
</dbReference>
<dbReference type="InterPro" id="IPR002125">
    <property type="entry name" value="CMP_dCMP_dom"/>
</dbReference>
<dbReference type="InterPro" id="IPR016193">
    <property type="entry name" value="Cytidine_deaminase-like"/>
</dbReference>
<dbReference type="InterPro" id="IPR028883">
    <property type="entry name" value="tRNA_aden_deaminase"/>
</dbReference>
<dbReference type="NCBIfam" id="NF008113">
    <property type="entry name" value="PRK10860.1"/>
    <property type="match status" value="1"/>
</dbReference>
<dbReference type="PANTHER" id="PTHR11079">
    <property type="entry name" value="CYTOSINE DEAMINASE FAMILY MEMBER"/>
    <property type="match status" value="1"/>
</dbReference>
<dbReference type="PANTHER" id="PTHR11079:SF202">
    <property type="entry name" value="TRNA-SPECIFIC ADENOSINE DEAMINASE"/>
    <property type="match status" value="1"/>
</dbReference>
<dbReference type="Pfam" id="PF14437">
    <property type="entry name" value="MafB19-deam"/>
    <property type="match status" value="1"/>
</dbReference>
<dbReference type="SUPFAM" id="SSF53927">
    <property type="entry name" value="Cytidine deaminase-like"/>
    <property type="match status" value="1"/>
</dbReference>
<dbReference type="PROSITE" id="PS00903">
    <property type="entry name" value="CYT_DCMP_DEAMINASES_1"/>
    <property type="match status" value="1"/>
</dbReference>
<dbReference type="PROSITE" id="PS51747">
    <property type="entry name" value="CYT_DCMP_DEAMINASES_2"/>
    <property type="match status" value="1"/>
</dbReference>
<organism>
    <name type="scientific">Shigella flexneri</name>
    <dbReference type="NCBI Taxonomy" id="623"/>
    <lineage>
        <taxon>Bacteria</taxon>
        <taxon>Pseudomonadati</taxon>
        <taxon>Pseudomonadota</taxon>
        <taxon>Gammaproteobacteria</taxon>
        <taxon>Enterobacterales</taxon>
        <taxon>Enterobacteriaceae</taxon>
        <taxon>Shigella</taxon>
    </lineage>
</organism>
<reference key="1">
    <citation type="journal article" date="2002" name="Nucleic Acids Res.">
        <title>Genome sequence of Shigella flexneri 2a: insights into pathogenicity through comparison with genomes of Escherichia coli K12 and O157.</title>
        <authorList>
            <person name="Jin Q."/>
            <person name="Yuan Z."/>
            <person name="Xu J."/>
            <person name="Wang Y."/>
            <person name="Shen Y."/>
            <person name="Lu W."/>
            <person name="Wang J."/>
            <person name="Liu H."/>
            <person name="Yang J."/>
            <person name="Yang F."/>
            <person name="Zhang X."/>
            <person name="Zhang J."/>
            <person name="Yang G."/>
            <person name="Wu H."/>
            <person name="Qu D."/>
            <person name="Dong J."/>
            <person name="Sun L."/>
            <person name="Xue Y."/>
            <person name="Zhao A."/>
            <person name="Gao Y."/>
            <person name="Zhu J."/>
            <person name="Kan B."/>
            <person name="Ding K."/>
            <person name="Chen S."/>
            <person name="Cheng H."/>
            <person name="Yao Z."/>
            <person name="He B."/>
            <person name="Chen R."/>
            <person name="Ma D."/>
            <person name="Qiang B."/>
            <person name="Wen Y."/>
            <person name="Hou Y."/>
            <person name="Yu J."/>
        </authorList>
    </citation>
    <scope>NUCLEOTIDE SEQUENCE [LARGE SCALE GENOMIC DNA]</scope>
    <source>
        <strain>301 / Serotype 2a</strain>
    </source>
</reference>
<reference key="2">
    <citation type="journal article" date="2003" name="Infect. Immun.">
        <title>Complete genome sequence and comparative genomics of Shigella flexneri serotype 2a strain 2457T.</title>
        <authorList>
            <person name="Wei J."/>
            <person name="Goldberg M.B."/>
            <person name="Burland V."/>
            <person name="Venkatesan M.M."/>
            <person name="Deng W."/>
            <person name="Fournier G."/>
            <person name="Mayhew G.F."/>
            <person name="Plunkett G. III"/>
            <person name="Rose D.J."/>
            <person name="Darling A."/>
            <person name="Mau B."/>
            <person name="Perna N.T."/>
            <person name="Payne S.M."/>
            <person name="Runyen-Janecky L.J."/>
            <person name="Zhou S."/>
            <person name="Schwartz D.C."/>
            <person name="Blattner F.R."/>
        </authorList>
    </citation>
    <scope>NUCLEOTIDE SEQUENCE [LARGE SCALE GENOMIC DNA]</scope>
    <source>
        <strain>ATCC 700930 / 2457T / Serotype 2a</strain>
    </source>
</reference>
<keyword id="KW-0378">Hydrolase</keyword>
<keyword id="KW-0479">Metal-binding</keyword>
<keyword id="KW-1185">Reference proteome</keyword>
<keyword id="KW-0819">tRNA processing</keyword>
<keyword id="KW-0862">Zinc</keyword>
<proteinExistence type="inferred from homology"/>
<evidence type="ECO:0000255" key="1">
    <source>
        <dbReference type="HAMAP-Rule" id="MF_00972"/>
    </source>
</evidence>
<evidence type="ECO:0000255" key="2">
    <source>
        <dbReference type="PROSITE-ProRule" id="PRU01083"/>
    </source>
</evidence>
<evidence type="ECO:0000305" key="3"/>
<feature type="chain" id="PRO_0000171738" description="tRNA-specific adenosine deaminase">
    <location>
        <begin position="1"/>
        <end position="167"/>
    </location>
</feature>
<feature type="domain" description="CMP/dCMP-type deaminase" evidence="2">
    <location>
        <begin position="6"/>
        <end position="117"/>
    </location>
</feature>
<feature type="active site" description="Proton donor" evidence="1">
    <location>
        <position position="59"/>
    </location>
</feature>
<feature type="binding site" evidence="1">
    <location>
        <position position="57"/>
    </location>
    <ligand>
        <name>Zn(2+)</name>
        <dbReference type="ChEBI" id="CHEBI:29105"/>
        <note>catalytic</note>
    </ligand>
</feature>
<feature type="binding site" evidence="1">
    <location>
        <position position="87"/>
    </location>
    <ligand>
        <name>Zn(2+)</name>
        <dbReference type="ChEBI" id="CHEBI:29105"/>
        <note>catalytic</note>
    </ligand>
</feature>
<feature type="binding site" evidence="1">
    <location>
        <position position="90"/>
    </location>
    <ligand>
        <name>Zn(2+)</name>
        <dbReference type="ChEBI" id="CHEBI:29105"/>
        <note>catalytic</note>
    </ligand>
</feature>
<comment type="function">
    <text evidence="1">Catalyzes the deamination of adenosine to inosine at the wobble position 34 of tRNA(Arg2).</text>
</comment>
<comment type="catalytic activity">
    <reaction evidence="1">
        <text>adenosine(34) in tRNA + H2O + H(+) = inosine(34) in tRNA + NH4(+)</text>
        <dbReference type="Rhea" id="RHEA:43168"/>
        <dbReference type="Rhea" id="RHEA-COMP:10373"/>
        <dbReference type="Rhea" id="RHEA-COMP:10374"/>
        <dbReference type="ChEBI" id="CHEBI:15377"/>
        <dbReference type="ChEBI" id="CHEBI:15378"/>
        <dbReference type="ChEBI" id="CHEBI:28938"/>
        <dbReference type="ChEBI" id="CHEBI:74411"/>
        <dbReference type="ChEBI" id="CHEBI:82852"/>
        <dbReference type="EC" id="3.5.4.33"/>
    </reaction>
</comment>
<comment type="cofactor">
    <cofactor evidence="1">
        <name>Zn(2+)</name>
        <dbReference type="ChEBI" id="CHEBI:29105"/>
    </cofactor>
    <text evidence="1">Binds 1 zinc ion per subunit.</text>
</comment>
<comment type="subunit">
    <text evidence="1">Homodimer.</text>
</comment>
<comment type="similarity">
    <text evidence="1">Belongs to the cytidine and deoxycytidylate deaminase family.</text>
</comment>
<comment type="sequence caution" evidence="3">
    <conflict type="erroneous initiation">
        <sequence resource="EMBL-CDS" id="AAN44103"/>
    </conflict>
    <text>Extended N-terminus.</text>
</comment>
<comment type="sequence caution" evidence="3">
    <conflict type="erroneous initiation">
        <sequence resource="EMBL-CDS" id="AAP17927"/>
    </conflict>
    <text>Extended N-terminus.</text>
</comment>
<sequence length="167" mass="18718">MSEVEFSHEYWMRHALTLAKRAWDEREVPVGAVLVHNNRVIGEGWNRPIGRHDPTAHAEIMALRQGGLVMQNYRLIDATLYVTLEPCVMCAGAMIHSRIGRVVFGARDAKTGAAGSLMDVLHHPGMNHRVEITEGILADECAALLSDFFRMRRQEIKAQKKAQSSTD</sequence>
<accession>P68397</accession>
<accession>P30134</accession>
<protein>
    <recommendedName>
        <fullName evidence="1">tRNA-specific adenosine deaminase</fullName>
        <ecNumber evidence="1">3.5.4.33</ecNumber>
    </recommendedName>
</protein>
<name>TADA_SHIFL</name>